<organism>
    <name type="scientific">Aphanothece halophytica</name>
    <dbReference type="NCBI Taxonomy" id="72020"/>
    <lineage>
        <taxon>Bacteria</taxon>
        <taxon>Bacillati</taxon>
        <taxon>Cyanobacteriota</taxon>
        <taxon>Cyanophyceae</taxon>
        <taxon>Oscillatoriophycideae</taxon>
        <taxon>Chroococcales</taxon>
        <taxon>Aphanothecaceae</taxon>
        <taxon>Aphanothece</taxon>
    </lineage>
</organism>
<evidence type="ECO:0000269" key="1">
    <source>
    </source>
</evidence>
<evidence type="ECO:0000303" key="2">
    <source>
    </source>
</evidence>
<evidence type="ECO:0000305" key="3"/>
<evidence type="ECO:0000305" key="4">
    <source>
    </source>
</evidence>
<reference key="1">
    <citation type="journal article" date="2003" name="J. Biol. Chem.">
        <title>Isolation and functional characterization of N-methyltransferases that catalyze betaine synthesis from glycine in a halotolerant photosynthetic organism Aphanothece halophytica.</title>
        <authorList>
            <person name="Waditee R."/>
            <person name="Tanaka Y."/>
            <person name="Aoki K."/>
            <person name="Hibino T."/>
            <person name="Jikuya H."/>
            <person name="Takano J."/>
            <person name="Takabe T."/>
            <person name="Takabe T."/>
        </authorList>
    </citation>
    <scope>NUCLEOTIDE SEQUENCE [GENOMIC DNA]</scope>
    <scope>FUNCTION AS A METHYLTRANSFERASE AND IN BETAINE BIOSYNTHESIS</scope>
    <scope>CATALYTIC ACTIVITY</scope>
    <scope>BIOPHYSICOCHEMICAL PROPERTIES</scope>
    <scope>PATHWAY</scope>
    <scope>SUBSTRATE SPECIFICITY</scope>
    <scope>ACTIVITY REGULATION</scope>
    <scope>SUBUNIT</scope>
    <scope>MUTAGENESIS OF PRO-171 AND MET-172</scope>
</reference>
<dbReference type="EC" id="2.1.1.157" evidence="1"/>
<dbReference type="EMBL" id="AB094498">
    <property type="protein sequence ID" value="BAC56940.1"/>
    <property type="molecule type" value="Genomic_DNA"/>
</dbReference>
<dbReference type="SMR" id="Q83WC3"/>
<dbReference type="KEGG" id="ag:BAC56940"/>
<dbReference type="BRENDA" id="2.1.1.157">
    <property type="organism ID" value="383"/>
</dbReference>
<dbReference type="UniPathway" id="UPA00530">
    <property type="reaction ID" value="UER00382"/>
</dbReference>
<dbReference type="UniPathway" id="UPA00530">
    <property type="reaction ID" value="UER00383"/>
</dbReference>
<dbReference type="GO" id="GO:0052729">
    <property type="term" value="F:dimethylglycine N-methyltransferase activity"/>
    <property type="evidence" value="ECO:0000314"/>
    <property type="project" value="UniProtKB"/>
</dbReference>
<dbReference type="GO" id="GO:0052730">
    <property type="term" value="F:sarcosine N-methyltransferase activity"/>
    <property type="evidence" value="ECO:0007669"/>
    <property type="project" value="RHEA"/>
</dbReference>
<dbReference type="GO" id="GO:0019286">
    <property type="term" value="P:glycine betaine biosynthetic process from glycine"/>
    <property type="evidence" value="ECO:0000314"/>
    <property type="project" value="UniProtKB"/>
</dbReference>
<dbReference type="GO" id="GO:0032259">
    <property type="term" value="P:methylation"/>
    <property type="evidence" value="ECO:0000314"/>
    <property type="project" value="UniProtKB"/>
</dbReference>
<dbReference type="CDD" id="cd02440">
    <property type="entry name" value="AdoMet_MTases"/>
    <property type="match status" value="1"/>
</dbReference>
<dbReference type="FunFam" id="3.40.50.150:FF:000461">
    <property type="entry name" value="Sarcosine/dimethylglycine N-methyltransferase"/>
    <property type="match status" value="1"/>
</dbReference>
<dbReference type="Gene3D" id="3.40.50.150">
    <property type="entry name" value="Vaccinia Virus protein VP39"/>
    <property type="match status" value="1"/>
</dbReference>
<dbReference type="InterPro" id="IPR050447">
    <property type="entry name" value="Erg6_SMT_methyltransf"/>
</dbReference>
<dbReference type="InterPro" id="IPR013216">
    <property type="entry name" value="Methyltransf_11"/>
</dbReference>
<dbReference type="InterPro" id="IPR029063">
    <property type="entry name" value="SAM-dependent_MTases_sf"/>
</dbReference>
<dbReference type="PANTHER" id="PTHR44068:SF11">
    <property type="entry name" value="GERANYL DIPHOSPHATE 2-C-METHYLTRANSFERASE"/>
    <property type="match status" value="1"/>
</dbReference>
<dbReference type="PANTHER" id="PTHR44068">
    <property type="entry name" value="ZGC:194242"/>
    <property type="match status" value="1"/>
</dbReference>
<dbReference type="Pfam" id="PF08241">
    <property type="entry name" value="Methyltransf_11"/>
    <property type="match status" value="1"/>
</dbReference>
<dbReference type="SUPFAM" id="SSF53335">
    <property type="entry name" value="S-adenosyl-L-methionine-dependent methyltransferases"/>
    <property type="match status" value="1"/>
</dbReference>
<name>SDMT_APHHA</name>
<feature type="chain" id="PRO_0000412535" description="Sarcosine/dimethylglycine N-methyltransferase">
    <location>
        <begin position="1"/>
        <end position="277"/>
    </location>
</feature>
<feature type="site" description="Important for dimethylglycine binding" evidence="4">
    <location>
        <position position="171"/>
    </location>
</feature>
<feature type="site" description="Important for dimethylglycine binding" evidence="4">
    <location>
        <position position="172"/>
    </location>
</feature>
<feature type="mutagenesis site" description="The Vmax value is about 27% of the wild-type when dimethylglycine is used as a methyl group acceptor. Glycine and sarcosine are ineffective as methyl group acceptors. The affinity for dimethylglycine decreases about 15-fold, and 2-fold for AdoMet. Almost inactive; when associated with R-172." evidence="1">
    <original>P</original>
    <variation>Q</variation>
    <location>
        <position position="171"/>
    </location>
</feature>
<feature type="mutagenesis site" description="Almost inactive; when associated with Q-171." evidence="1">
    <original>M</original>
    <variation>R</variation>
    <location>
        <position position="172"/>
    </location>
</feature>
<keyword id="KW-0489">Methyltransferase</keyword>
<keyword id="KW-0949">S-adenosyl-L-methionine</keyword>
<keyword id="KW-0808">Transferase</keyword>
<protein>
    <recommendedName>
        <fullName evidence="3">Sarcosine/dimethylglycine N-methyltransferase</fullName>
        <ecNumber evidence="1">2.1.1.157</ecNumber>
    </recommendedName>
    <alternativeName>
        <fullName evidence="2">ApDMT</fullName>
    </alternativeName>
    <alternativeName>
        <fullName>Dimethylglycine N-methyltransferase</fullName>
    </alternativeName>
    <alternativeName>
        <fullName evidence="2">Dimethylglycine-betaine methyltransferase</fullName>
    </alternativeName>
</protein>
<comment type="function">
    <text evidence="1">Catalyzes the methylation of sarcosine and dimethylglycine to dimethylglycine and betaine, respectively, with S-adenosylmethionine (AdoMet) acting as the methyl donor (PubMed:12466265). Activity with sarcosine is much weaker than activity with dimethylglycine (PubMed:12466265).</text>
</comment>
<comment type="catalytic activity">
    <reaction evidence="1">
        <text>sarcosine + 2 S-adenosyl-L-methionine = glycine betaine + 2 S-adenosyl-L-homocysteine + 2 H(+)</text>
        <dbReference type="Rhea" id="RHEA:32467"/>
        <dbReference type="ChEBI" id="CHEBI:15378"/>
        <dbReference type="ChEBI" id="CHEBI:17750"/>
        <dbReference type="ChEBI" id="CHEBI:57433"/>
        <dbReference type="ChEBI" id="CHEBI:57856"/>
        <dbReference type="ChEBI" id="CHEBI:59789"/>
        <dbReference type="EC" id="2.1.1.157"/>
    </reaction>
    <physiologicalReaction direction="left-to-right" evidence="1">
        <dbReference type="Rhea" id="RHEA:32468"/>
    </physiologicalReaction>
</comment>
<comment type="catalytic activity">
    <reaction evidence="1">
        <text>sarcosine + S-adenosyl-L-methionine = N,N-dimethylglycine + S-adenosyl-L-homocysteine + H(+)</text>
        <dbReference type="Rhea" id="RHEA:15453"/>
        <dbReference type="ChEBI" id="CHEBI:15378"/>
        <dbReference type="ChEBI" id="CHEBI:57433"/>
        <dbReference type="ChEBI" id="CHEBI:57856"/>
        <dbReference type="ChEBI" id="CHEBI:58251"/>
        <dbReference type="ChEBI" id="CHEBI:59789"/>
    </reaction>
    <physiologicalReaction direction="left-to-right" evidence="1">
        <dbReference type="Rhea" id="RHEA:15454"/>
    </physiologicalReaction>
</comment>
<comment type="catalytic activity">
    <reaction evidence="1">
        <text>N,N-dimethylglycine + S-adenosyl-L-methionine = glycine betaine + S-adenosyl-L-homocysteine + H(+)</text>
        <dbReference type="Rhea" id="RHEA:10072"/>
        <dbReference type="ChEBI" id="CHEBI:15378"/>
        <dbReference type="ChEBI" id="CHEBI:17750"/>
        <dbReference type="ChEBI" id="CHEBI:57856"/>
        <dbReference type="ChEBI" id="CHEBI:58251"/>
        <dbReference type="ChEBI" id="CHEBI:59789"/>
    </reaction>
    <physiologicalReaction direction="left-to-right" evidence="1">
        <dbReference type="Rhea" id="RHEA:10073"/>
    </physiologicalReaction>
</comment>
<comment type="activity regulation">
    <text evidence="1">Inhibited by n-butylic acid and S-adenosyl-L-homocysteine.</text>
</comment>
<comment type="biophysicochemical properties">
    <kinetics>
        <KM evidence="1">0.18 mM for S-adenosyl-L-homocysteine (at pH 8.8 and at 37 degrees Celsius)</KM>
        <KM evidence="1">0.5 mM for dimethylglycine (at pH 8.8 and at 37 degrees Celsius)</KM>
        <Vmax evidence="1">0.47 umol/min/mg enzyme (at pH 8.8 and at 37 degrees Celsius)</Vmax>
    </kinetics>
    <phDependence>
        <text evidence="1">Optimum pH is 8.8. The activities remain high at more alkaline pH but decrease sharply at the acidic side of the optimal pH.</text>
    </phDependence>
</comment>
<comment type="pathway">
    <text evidence="1">Amine and polyamine biosynthesis; betaine biosynthesis via glycine pathway; betaine from glycine: step 2/3.</text>
</comment>
<comment type="pathway">
    <text evidence="1">Amine and polyamine biosynthesis; betaine biosynthesis via glycine pathway; betaine from glycine: step 3/3.</text>
</comment>
<comment type="subunit">
    <text evidence="1">Monomer.</text>
</comment>
<comment type="similarity">
    <text evidence="3">Belongs to the methyltransferase superfamily.</text>
</comment>
<sequence>MTKADAVAKQAQDYYDSGSADGFYYRIWGGEDLHIGIYNTPDEPIYDASVRTVSRICDKIKNWPAGTKVLDLGAGYGGSARYMAKHHGFDVDCLNISLVQNERNRQMNQEQGLADKIRVFDGSFEELPFENKSYDVLWSQDSILHSGNRRKVMEEADRVLKSGGDFVFTDPMQTDNCPEGVLEPVLARIHLDSLGSVGFYRQVAEELGWEFVEFDEQTHQLVNHYSRVLQELEAHYDQLQPECSQEYLDRMKVGLNHWINAGKSGYMAWGILKFHKP</sequence>
<proteinExistence type="evidence at protein level"/>
<accession>Q83WC3</accession>